<dbReference type="EC" id="3.6.5.n1" evidence="1"/>
<dbReference type="EMBL" id="CP000020">
    <property type="protein sequence ID" value="AAW86584.1"/>
    <property type="molecule type" value="Genomic_DNA"/>
</dbReference>
<dbReference type="RefSeq" id="WP_011262550.1">
    <property type="nucleotide sequence ID" value="NC_006840.2"/>
</dbReference>
<dbReference type="RefSeq" id="YP_205472.1">
    <property type="nucleotide sequence ID" value="NC_006840.2"/>
</dbReference>
<dbReference type="SMR" id="Q5E312"/>
<dbReference type="STRING" id="312309.VF_2089"/>
<dbReference type="EnsemblBacteria" id="AAW86584">
    <property type="protein sequence ID" value="AAW86584"/>
    <property type="gene ID" value="VF_2089"/>
</dbReference>
<dbReference type="GeneID" id="54164794"/>
<dbReference type="KEGG" id="vfi:VF_2089"/>
<dbReference type="PATRIC" id="fig|312309.11.peg.2131"/>
<dbReference type="eggNOG" id="COG0481">
    <property type="taxonomic scope" value="Bacteria"/>
</dbReference>
<dbReference type="HOGENOM" id="CLU_009995_3_3_6"/>
<dbReference type="OrthoDB" id="9804431at2"/>
<dbReference type="Proteomes" id="UP000000537">
    <property type="component" value="Chromosome I"/>
</dbReference>
<dbReference type="GO" id="GO:0005886">
    <property type="term" value="C:plasma membrane"/>
    <property type="evidence" value="ECO:0007669"/>
    <property type="project" value="UniProtKB-SubCell"/>
</dbReference>
<dbReference type="GO" id="GO:0005525">
    <property type="term" value="F:GTP binding"/>
    <property type="evidence" value="ECO:0007669"/>
    <property type="project" value="UniProtKB-UniRule"/>
</dbReference>
<dbReference type="GO" id="GO:0003924">
    <property type="term" value="F:GTPase activity"/>
    <property type="evidence" value="ECO:0007669"/>
    <property type="project" value="UniProtKB-UniRule"/>
</dbReference>
<dbReference type="GO" id="GO:0097216">
    <property type="term" value="F:guanosine tetraphosphate binding"/>
    <property type="evidence" value="ECO:0007669"/>
    <property type="project" value="UniProtKB-ARBA"/>
</dbReference>
<dbReference type="GO" id="GO:0043022">
    <property type="term" value="F:ribosome binding"/>
    <property type="evidence" value="ECO:0007669"/>
    <property type="project" value="UniProtKB-UniRule"/>
</dbReference>
<dbReference type="GO" id="GO:0003746">
    <property type="term" value="F:translation elongation factor activity"/>
    <property type="evidence" value="ECO:0007669"/>
    <property type="project" value="UniProtKB-UniRule"/>
</dbReference>
<dbReference type="GO" id="GO:0045727">
    <property type="term" value="P:positive regulation of translation"/>
    <property type="evidence" value="ECO:0007669"/>
    <property type="project" value="UniProtKB-UniRule"/>
</dbReference>
<dbReference type="CDD" id="cd03699">
    <property type="entry name" value="EF4_II"/>
    <property type="match status" value="1"/>
</dbReference>
<dbReference type="CDD" id="cd16260">
    <property type="entry name" value="EF4_III"/>
    <property type="match status" value="1"/>
</dbReference>
<dbReference type="CDD" id="cd01890">
    <property type="entry name" value="LepA"/>
    <property type="match status" value="1"/>
</dbReference>
<dbReference type="CDD" id="cd03709">
    <property type="entry name" value="lepA_C"/>
    <property type="match status" value="1"/>
</dbReference>
<dbReference type="FunFam" id="3.40.50.300:FF:000078">
    <property type="entry name" value="Elongation factor 4"/>
    <property type="match status" value="1"/>
</dbReference>
<dbReference type="FunFam" id="2.40.30.10:FF:000015">
    <property type="entry name" value="Translation factor GUF1, mitochondrial"/>
    <property type="match status" value="1"/>
</dbReference>
<dbReference type="FunFam" id="3.30.70.240:FF:000007">
    <property type="entry name" value="Translation factor GUF1, mitochondrial"/>
    <property type="match status" value="1"/>
</dbReference>
<dbReference type="FunFam" id="3.30.70.2570:FF:000001">
    <property type="entry name" value="Translation factor GUF1, mitochondrial"/>
    <property type="match status" value="1"/>
</dbReference>
<dbReference type="FunFam" id="3.30.70.870:FF:000004">
    <property type="entry name" value="Translation factor GUF1, mitochondrial"/>
    <property type="match status" value="1"/>
</dbReference>
<dbReference type="Gene3D" id="3.30.70.240">
    <property type="match status" value="1"/>
</dbReference>
<dbReference type="Gene3D" id="3.30.70.2570">
    <property type="entry name" value="Elongation factor 4, C-terminal domain"/>
    <property type="match status" value="1"/>
</dbReference>
<dbReference type="Gene3D" id="3.30.70.870">
    <property type="entry name" value="Elongation Factor G (Translational Gtpase), domain 3"/>
    <property type="match status" value="1"/>
</dbReference>
<dbReference type="Gene3D" id="3.40.50.300">
    <property type="entry name" value="P-loop containing nucleotide triphosphate hydrolases"/>
    <property type="match status" value="1"/>
</dbReference>
<dbReference type="Gene3D" id="2.40.30.10">
    <property type="entry name" value="Translation factors"/>
    <property type="match status" value="1"/>
</dbReference>
<dbReference type="HAMAP" id="MF_00071">
    <property type="entry name" value="LepA"/>
    <property type="match status" value="1"/>
</dbReference>
<dbReference type="InterPro" id="IPR006297">
    <property type="entry name" value="EF-4"/>
</dbReference>
<dbReference type="InterPro" id="IPR035647">
    <property type="entry name" value="EFG_III/V"/>
</dbReference>
<dbReference type="InterPro" id="IPR000640">
    <property type="entry name" value="EFG_V-like"/>
</dbReference>
<dbReference type="InterPro" id="IPR004161">
    <property type="entry name" value="EFTu-like_2"/>
</dbReference>
<dbReference type="InterPro" id="IPR031157">
    <property type="entry name" value="G_TR_CS"/>
</dbReference>
<dbReference type="InterPro" id="IPR038363">
    <property type="entry name" value="LepA_C_sf"/>
</dbReference>
<dbReference type="InterPro" id="IPR013842">
    <property type="entry name" value="LepA_CTD"/>
</dbReference>
<dbReference type="InterPro" id="IPR035654">
    <property type="entry name" value="LepA_IV"/>
</dbReference>
<dbReference type="InterPro" id="IPR027417">
    <property type="entry name" value="P-loop_NTPase"/>
</dbReference>
<dbReference type="InterPro" id="IPR005225">
    <property type="entry name" value="Small_GTP-bd"/>
</dbReference>
<dbReference type="InterPro" id="IPR000795">
    <property type="entry name" value="T_Tr_GTP-bd_dom"/>
</dbReference>
<dbReference type="InterPro" id="IPR009000">
    <property type="entry name" value="Transl_B-barrel_sf"/>
</dbReference>
<dbReference type="NCBIfam" id="TIGR01393">
    <property type="entry name" value="lepA"/>
    <property type="match status" value="1"/>
</dbReference>
<dbReference type="NCBIfam" id="TIGR00231">
    <property type="entry name" value="small_GTP"/>
    <property type="match status" value="1"/>
</dbReference>
<dbReference type="PANTHER" id="PTHR43512:SF4">
    <property type="entry name" value="TRANSLATION FACTOR GUF1 HOMOLOG, CHLOROPLASTIC"/>
    <property type="match status" value="1"/>
</dbReference>
<dbReference type="PANTHER" id="PTHR43512">
    <property type="entry name" value="TRANSLATION FACTOR GUF1-RELATED"/>
    <property type="match status" value="1"/>
</dbReference>
<dbReference type="Pfam" id="PF00679">
    <property type="entry name" value="EFG_C"/>
    <property type="match status" value="1"/>
</dbReference>
<dbReference type="Pfam" id="PF00009">
    <property type="entry name" value="GTP_EFTU"/>
    <property type="match status" value="1"/>
</dbReference>
<dbReference type="Pfam" id="PF03144">
    <property type="entry name" value="GTP_EFTU_D2"/>
    <property type="match status" value="1"/>
</dbReference>
<dbReference type="Pfam" id="PF06421">
    <property type="entry name" value="LepA_C"/>
    <property type="match status" value="1"/>
</dbReference>
<dbReference type="PRINTS" id="PR00315">
    <property type="entry name" value="ELONGATNFCT"/>
</dbReference>
<dbReference type="SMART" id="SM00838">
    <property type="entry name" value="EFG_C"/>
    <property type="match status" value="1"/>
</dbReference>
<dbReference type="SUPFAM" id="SSF54980">
    <property type="entry name" value="EF-G C-terminal domain-like"/>
    <property type="match status" value="2"/>
</dbReference>
<dbReference type="SUPFAM" id="SSF52540">
    <property type="entry name" value="P-loop containing nucleoside triphosphate hydrolases"/>
    <property type="match status" value="1"/>
</dbReference>
<dbReference type="SUPFAM" id="SSF50447">
    <property type="entry name" value="Translation proteins"/>
    <property type="match status" value="1"/>
</dbReference>
<dbReference type="PROSITE" id="PS00301">
    <property type="entry name" value="G_TR_1"/>
    <property type="match status" value="1"/>
</dbReference>
<dbReference type="PROSITE" id="PS51722">
    <property type="entry name" value="G_TR_2"/>
    <property type="match status" value="1"/>
</dbReference>
<name>LEPA_ALIF1</name>
<organism>
    <name type="scientific">Aliivibrio fischeri (strain ATCC 700601 / ES114)</name>
    <name type="common">Vibrio fischeri</name>
    <dbReference type="NCBI Taxonomy" id="312309"/>
    <lineage>
        <taxon>Bacteria</taxon>
        <taxon>Pseudomonadati</taxon>
        <taxon>Pseudomonadota</taxon>
        <taxon>Gammaproteobacteria</taxon>
        <taxon>Vibrionales</taxon>
        <taxon>Vibrionaceae</taxon>
        <taxon>Aliivibrio</taxon>
    </lineage>
</organism>
<keyword id="KW-0997">Cell inner membrane</keyword>
<keyword id="KW-1003">Cell membrane</keyword>
<keyword id="KW-0342">GTP-binding</keyword>
<keyword id="KW-0378">Hydrolase</keyword>
<keyword id="KW-0472">Membrane</keyword>
<keyword id="KW-0547">Nucleotide-binding</keyword>
<keyword id="KW-0648">Protein biosynthesis</keyword>
<keyword id="KW-1185">Reference proteome</keyword>
<proteinExistence type="inferred from homology"/>
<sequence length="597" mass="65864">MKHIRNFSIIAHIDHGKSTLSDRLIQVCGGLSDREMAAQVLDSMDLERERGITIKAQSVTLDYTAKDGETYQLNFIDTPGHVDFSYEVSRSLAACEGALLVVDAGQGVEAQTLANCYTAIEMDLEVVPILNKIDLPAADPDRVAEEIEEIVGIDATDATRCSAKTGLGVDEVLETIVKSIPAPEGDPEAPTQALIIDSWFDNYLGVVSLVRIKNGSLKKNDKIKVMSTGQVWGIDRIGIFTPKQIDTDVLNTGEVGWVVCGIKDILGAPVGDTLTHAKGGCEERLPGFQKVKPQVYAGLFPVSSDDYENFRDALGKLSLNDASLFYEPESSAALGFGFRCGFLGMLHMEIIQERLEREYDLDLITTAPTVVYEVAKTDGEILYVDSPAKLPAVNDIDEIREPIARCNILVPSDYLGNVITLCVEKRGVQVDMQYHGNQVAVTYDVPMAEVVLDFFDRLKSTSRGYASLDYNFQRYEASSMVRVDVLLNGDKVDALAIITHKDNSQSRGRLLVEKMKEFIPRQMFDIAIQAAIGNHIIARSTVKQLRKNVIAKCYGGDVSRKKKLLKKQKEGKKRMKQIGNVELPQEAFLAILHVGKD</sequence>
<feature type="chain" id="PRO_0000224808" description="Elongation factor 4">
    <location>
        <begin position="1"/>
        <end position="597"/>
    </location>
</feature>
<feature type="domain" description="tr-type G">
    <location>
        <begin position="2"/>
        <end position="184"/>
    </location>
</feature>
<feature type="binding site" evidence="1">
    <location>
        <begin position="14"/>
        <end position="19"/>
    </location>
    <ligand>
        <name>GTP</name>
        <dbReference type="ChEBI" id="CHEBI:37565"/>
    </ligand>
</feature>
<feature type="binding site" evidence="1">
    <location>
        <begin position="131"/>
        <end position="134"/>
    </location>
    <ligand>
        <name>GTP</name>
        <dbReference type="ChEBI" id="CHEBI:37565"/>
    </ligand>
</feature>
<accession>Q5E312</accession>
<gene>
    <name evidence="1" type="primary">lepA</name>
    <name type="ordered locus">VF_2089</name>
</gene>
<reference key="1">
    <citation type="journal article" date="2005" name="Proc. Natl. Acad. Sci. U.S.A.">
        <title>Complete genome sequence of Vibrio fischeri: a symbiotic bacterium with pathogenic congeners.</title>
        <authorList>
            <person name="Ruby E.G."/>
            <person name="Urbanowski M."/>
            <person name="Campbell J."/>
            <person name="Dunn A."/>
            <person name="Faini M."/>
            <person name="Gunsalus R."/>
            <person name="Lostroh P."/>
            <person name="Lupp C."/>
            <person name="McCann J."/>
            <person name="Millikan D."/>
            <person name="Schaefer A."/>
            <person name="Stabb E."/>
            <person name="Stevens A."/>
            <person name="Visick K."/>
            <person name="Whistler C."/>
            <person name="Greenberg E.P."/>
        </authorList>
    </citation>
    <scope>NUCLEOTIDE SEQUENCE [LARGE SCALE GENOMIC DNA]</scope>
    <source>
        <strain>ATCC 700601 / ES114</strain>
    </source>
</reference>
<comment type="function">
    <text evidence="1">Required for accurate and efficient protein synthesis under certain stress conditions. May act as a fidelity factor of the translation reaction, by catalyzing a one-codon backward translocation of tRNAs on improperly translocated ribosomes. Back-translocation proceeds from a post-translocation (POST) complex to a pre-translocation (PRE) complex, thus giving elongation factor G a second chance to translocate the tRNAs correctly. Binds to ribosomes in a GTP-dependent manner.</text>
</comment>
<comment type="catalytic activity">
    <reaction evidence="1">
        <text>GTP + H2O = GDP + phosphate + H(+)</text>
        <dbReference type="Rhea" id="RHEA:19669"/>
        <dbReference type="ChEBI" id="CHEBI:15377"/>
        <dbReference type="ChEBI" id="CHEBI:15378"/>
        <dbReference type="ChEBI" id="CHEBI:37565"/>
        <dbReference type="ChEBI" id="CHEBI:43474"/>
        <dbReference type="ChEBI" id="CHEBI:58189"/>
        <dbReference type="EC" id="3.6.5.n1"/>
    </reaction>
</comment>
<comment type="subcellular location">
    <subcellularLocation>
        <location evidence="1">Cell inner membrane</location>
        <topology evidence="1">Peripheral membrane protein</topology>
        <orientation evidence="1">Cytoplasmic side</orientation>
    </subcellularLocation>
</comment>
<comment type="similarity">
    <text evidence="1">Belongs to the TRAFAC class translation factor GTPase superfamily. Classic translation factor GTPase family. LepA subfamily.</text>
</comment>
<protein>
    <recommendedName>
        <fullName evidence="1">Elongation factor 4</fullName>
        <shortName evidence="1">EF-4</shortName>
        <ecNumber evidence="1">3.6.5.n1</ecNumber>
    </recommendedName>
    <alternativeName>
        <fullName evidence="1">Ribosomal back-translocase LepA</fullName>
    </alternativeName>
</protein>
<evidence type="ECO:0000255" key="1">
    <source>
        <dbReference type="HAMAP-Rule" id="MF_00071"/>
    </source>
</evidence>